<dbReference type="EC" id="2.7.7.6" evidence="1"/>
<dbReference type="EMBL" id="CP000323">
    <property type="protein sequence ID" value="ABE75781.1"/>
    <property type="molecule type" value="Genomic_DNA"/>
</dbReference>
<dbReference type="RefSeq" id="WP_011280985.1">
    <property type="nucleotide sequence ID" value="NC_007969.1"/>
</dbReference>
<dbReference type="SMR" id="Q1Q972"/>
<dbReference type="STRING" id="335284.Pcryo_2004"/>
<dbReference type="KEGG" id="pcr:Pcryo_2004"/>
<dbReference type="eggNOG" id="COG1758">
    <property type="taxonomic scope" value="Bacteria"/>
</dbReference>
<dbReference type="HOGENOM" id="CLU_125406_5_3_6"/>
<dbReference type="Proteomes" id="UP000002425">
    <property type="component" value="Chromosome"/>
</dbReference>
<dbReference type="GO" id="GO:0000428">
    <property type="term" value="C:DNA-directed RNA polymerase complex"/>
    <property type="evidence" value="ECO:0007669"/>
    <property type="project" value="UniProtKB-KW"/>
</dbReference>
<dbReference type="GO" id="GO:0003677">
    <property type="term" value="F:DNA binding"/>
    <property type="evidence" value="ECO:0007669"/>
    <property type="project" value="UniProtKB-UniRule"/>
</dbReference>
<dbReference type="GO" id="GO:0003899">
    <property type="term" value="F:DNA-directed RNA polymerase activity"/>
    <property type="evidence" value="ECO:0007669"/>
    <property type="project" value="UniProtKB-UniRule"/>
</dbReference>
<dbReference type="GO" id="GO:0006351">
    <property type="term" value="P:DNA-templated transcription"/>
    <property type="evidence" value="ECO:0007669"/>
    <property type="project" value="UniProtKB-UniRule"/>
</dbReference>
<dbReference type="Gene3D" id="3.90.940.10">
    <property type="match status" value="1"/>
</dbReference>
<dbReference type="HAMAP" id="MF_00366">
    <property type="entry name" value="RNApol_bact_RpoZ"/>
    <property type="match status" value="1"/>
</dbReference>
<dbReference type="InterPro" id="IPR003716">
    <property type="entry name" value="DNA-dir_RNA_pol_omega"/>
</dbReference>
<dbReference type="InterPro" id="IPR006110">
    <property type="entry name" value="Pol_omega/Rpo6/RPB6"/>
</dbReference>
<dbReference type="InterPro" id="IPR036161">
    <property type="entry name" value="RPB6/omega-like_sf"/>
</dbReference>
<dbReference type="NCBIfam" id="TIGR00690">
    <property type="entry name" value="rpoZ"/>
    <property type="match status" value="1"/>
</dbReference>
<dbReference type="PANTHER" id="PTHR34476">
    <property type="entry name" value="DNA-DIRECTED RNA POLYMERASE SUBUNIT OMEGA"/>
    <property type="match status" value="1"/>
</dbReference>
<dbReference type="PANTHER" id="PTHR34476:SF1">
    <property type="entry name" value="DNA-DIRECTED RNA POLYMERASE SUBUNIT OMEGA"/>
    <property type="match status" value="1"/>
</dbReference>
<dbReference type="Pfam" id="PF01192">
    <property type="entry name" value="RNA_pol_Rpb6"/>
    <property type="match status" value="1"/>
</dbReference>
<dbReference type="SMART" id="SM01409">
    <property type="entry name" value="RNA_pol_Rpb6"/>
    <property type="match status" value="1"/>
</dbReference>
<dbReference type="SUPFAM" id="SSF63562">
    <property type="entry name" value="RPB6/omega subunit-like"/>
    <property type="match status" value="1"/>
</dbReference>
<feature type="chain" id="PRO_1000005984" description="DNA-directed RNA polymerase subunit omega">
    <location>
        <begin position="1"/>
        <end position="86"/>
    </location>
</feature>
<proteinExistence type="inferred from homology"/>
<gene>
    <name evidence="1" type="primary">rpoZ</name>
    <name type="ordered locus">Pcryo_2004</name>
</gene>
<name>RPOZ_PSYCK</name>
<reference key="1">
    <citation type="submission" date="2006-03" db="EMBL/GenBank/DDBJ databases">
        <title>Complete sequence of chromosome of Psychrobacter cryohalolentis K5.</title>
        <authorList>
            <consortium name="US DOE Joint Genome Institute"/>
            <person name="Copeland A."/>
            <person name="Lucas S."/>
            <person name="Lapidus A."/>
            <person name="Barry K."/>
            <person name="Detter J.C."/>
            <person name="Glavina T."/>
            <person name="Hammon N."/>
            <person name="Israni S."/>
            <person name="Dalin E."/>
            <person name="Tice H."/>
            <person name="Pitluck S."/>
            <person name="Brettin T."/>
            <person name="Bruce D."/>
            <person name="Han C."/>
            <person name="Tapia R."/>
            <person name="Sims D.R."/>
            <person name="Gilna P."/>
            <person name="Schmutz J."/>
            <person name="Larimer F."/>
            <person name="Land M."/>
            <person name="Hauser L."/>
            <person name="Kyrpides N."/>
            <person name="Kim E."/>
            <person name="Richardson P."/>
        </authorList>
    </citation>
    <scope>NUCLEOTIDE SEQUENCE [LARGE SCALE GENOMIC DNA]</scope>
    <source>
        <strain>ATCC BAA-1226 / DSM 17306 / VKM B-2378 / K5</strain>
    </source>
</reference>
<accession>Q1Q972</accession>
<sequence>MARVTIEDCLDNVDNRFELVLVASKRARQLAKGIAEPLVDVDNDKPTVLALREIAAGKITRDILNQPEHNFATSSLDLALSGDHSF</sequence>
<comment type="function">
    <text evidence="1">Promotes RNA polymerase assembly. Latches the N- and C-terminal regions of the beta' subunit thereby facilitating its interaction with the beta and alpha subunits.</text>
</comment>
<comment type="catalytic activity">
    <reaction evidence="1">
        <text>RNA(n) + a ribonucleoside 5'-triphosphate = RNA(n+1) + diphosphate</text>
        <dbReference type="Rhea" id="RHEA:21248"/>
        <dbReference type="Rhea" id="RHEA-COMP:14527"/>
        <dbReference type="Rhea" id="RHEA-COMP:17342"/>
        <dbReference type="ChEBI" id="CHEBI:33019"/>
        <dbReference type="ChEBI" id="CHEBI:61557"/>
        <dbReference type="ChEBI" id="CHEBI:140395"/>
        <dbReference type="EC" id="2.7.7.6"/>
    </reaction>
</comment>
<comment type="subunit">
    <text evidence="1">The RNAP catalytic core consists of 2 alpha, 1 beta, 1 beta' and 1 omega subunit. When a sigma factor is associated with the core the holoenzyme is formed, which can initiate transcription.</text>
</comment>
<comment type="similarity">
    <text evidence="1">Belongs to the RNA polymerase subunit omega family.</text>
</comment>
<keyword id="KW-0240">DNA-directed RNA polymerase</keyword>
<keyword id="KW-0548">Nucleotidyltransferase</keyword>
<keyword id="KW-0804">Transcription</keyword>
<keyword id="KW-0808">Transferase</keyword>
<protein>
    <recommendedName>
        <fullName evidence="1">DNA-directed RNA polymerase subunit omega</fullName>
        <shortName evidence="1">RNAP omega subunit</shortName>
        <ecNumber evidence="1">2.7.7.6</ecNumber>
    </recommendedName>
    <alternativeName>
        <fullName evidence="1">RNA polymerase omega subunit</fullName>
    </alternativeName>
    <alternativeName>
        <fullName evidence="1">Transcriptase subunit omega</fullName>
    </alternativeName>
</protein>
<evidence type="ECO:0000255" key="1">
    <source>
        <dbReference type="HAMAP-Rule" id="MF_00366"/>
    </source>
</evidence>
<organism>
    <name type="scientific">Psychrobacter cryohalolentis (strain ATCC BAA-1226 / DSM 17306 / VKM B-2378 / K5)</name>
    <dbReference type="NCBI Taxonomy" id="335284"/>
    <lineage>
        <taxon>Bacteria</taxon>
        <taxon>Pseudomonadati</taxon>
        <taxon>Pseudomonadota</taxon>
        <taxon>Gammaproteobacteria</taxon>
        <taxon>Moraxellales</taxon>
        <taxon>Moraxellaceae</taxon>
        <taxon>Psychrobacter</taxon>
    </lineage>
</organism>